<organism>
    <name type="scientific">Salmonella typhimurium (strain LT2 / SGSC1412 / ATCC 700720)</name>
    <dbReference type="NCBI Taxonomy" id="99287"/>
    <lineage>
        <taxon>Bacteria</taxon>
        <taxon>Pseudomonadati</taxon>
        <taxon>Pseudomonadota</taxon>
        <taxon>Gammaproteobacteria</taxon>
        <taxon>Enterobacterales</taxon>
        <taxon>Enterobacteriaceae</taxon>
        <taxon>Salmonella</taxon>
    </lineage>
</organism>
<keyword id="KW-0315">Glutamine amidotransferase</keyword>
<keyword id="KW-1185">Reference proteome</keyword>
<keyword id="KW-0808">Transferase</keyword>
<name>YFEJ_SALTY</name>
<comment type="sequence caution" evidence="2">
    <conflict type="frameshift">
        <sequence resource="EMBL-CDS" id="AAC43345"/>
    </conflict>
</comment>
<gene>
    <name type="primary">yfeJ</name>
    <name type="ordered locus">STM2437</name>
</gene>
<evidence type="ECO:0000255" key="1">
    <source>
        <dbReference type="PROSITE-ProRule" id="PRU00605"/>
    </source>
</evidence>
<evidence type="ECO:0000305" key="2"/>
<dbReference type="EMBL" id="U11243">
    <property type="protein sequence ID" value="AAC43345.1"/>
    <property type="status" value="ALT_FRAME"/>
    <property type="molecule type" value="Genomic_DNA"/>
</dbReference>
<dbReference type="EMBL" id="AE006468">
    <property type="protein sequence ID" value="AAL21331.1"/>
    <property type="molecule type" value="Genomic_DNA"/>
</dbReference>
<dbReference type="RefSeq" id="NP_461372.1">
    <property type="nucleotide sequence ID" value="NC_003197.2"/>
</dbReference>
<dbReference type="RefSeq" id="WP_001263761.1">
    <property type="nucleotide sequence ID" value="NC_003197.2"/>
</dbReference>
<dbReference type="SMR" id="P40194"/>
<dbReference type="STRING" id="99287.STM2437"/>
<dbReference type="PaxDb" id="99287-STM2437"/>
<dbReference type="GeneID" id="1253959"/>
<dbReference type="KEGG" id="stm:STM2437"/>
<dbReference type="PATRIC" id="fig|99287.12.peg.2575"/>
<dbReference type="HOGENOM" id="CLU_054974_1_0_6"/>
<dbReference type="OMA" id="TSMLHWH"/>
<dbReference type="PhylomeDB" id="P40194"/>
<dbReference type="BioCyc" id="MetaCyc:STM2437-MONOMER"/>
<dbReference type="BioCyc" id="SENT99287:STM2437-MONOMER"/>
<dbReference type="STRENDA-DB" id="T09BFV">
    <property type="experiment" value="Measurement of Enzyme Activity of STM2437 toward glutamyl derivatives"/>
</dbReference>
<dbReference type="Proteomes" id="UP000001014">
    <property type="component" value="Chromosome"/>
</dbReference>
<dbReference type="GO" id="GO:0005829">
    <property type="term" value="C:cytosol"/>
    <property type="evidence" value="ECO:0000318"/>
    <property type="project" value="GO_Central"/>
</dbReference>
<dbReference type="GO" id="GO:0016740">
    <property type="term" value="F:transferase activity"/>
    <property type="evidence" value="ECO:0007669"/>
    <property type="project" value="UniProtKB-KW"/>
</dbReference>
<dbReference type="CDD" id="cd01741">
    <property type="entry name" value="GATase1_1"/>
    <property type="match status" value="1"/>
</dbReference>
<dbReference type="FunFam" id="3.40.50.880:FF:000033">
    <property type="entry name" value="Glutamine amidotransferase class-I"/>
    <property type="match status" value="1"/>
</dbReference>
<dbReference type="Gene3D" id="3.40.50.880">
    <property type="match status" value="1"/>
</dbReference>
<dbReference type="InterPro" id="IPR044992">
    <property type="entry name" value="ChyE-like"/>
</dbReference>
<dbReference type="InterPro" id="IPR029062">
    <property type="entry name" value="Class_I_gatase-like"/>
</dbReference>
<dbReference type="InterPro" id="IPR017926">
    <property type="entry name" value="GATASE"/>
</dbReference>
<dbReference type="NCBIfam" id="NF006098">
    <property type="entry name" value="PRK08250.1"/>
    <property type="match status" value="1"/>
</dbReference>
<dbReference type="PANTHER" id="PTHR42695">
    <property type="entry name" value="GLUTAMINE AMIDOTRANSFERASE YLR126C-RELATED"/>
    <property type="match status" value="1"/>
</dbReference>
<dbReference type="PANTHER" id="PTHR42695:SF5">
    <property type="entry name" value="GLUTAMINE AMIDOTRANSFERASE YLR126C-RELATED"/>
    <property type="match status" value="1"/>
</dbReference>
<dbReference type="Pfam" id="PF00117">
    <property type="entry name" value="GATase"/>
    <property type="match status" value="1"/>
</dbReference>
<dbReference type="SUPFAM" id="SSF52317">
    <property type="entry name" value="Class I glutamine amidotransferase-like"/>
    <property type="match status" value="1"/>
</dbReference>
<dbReference type="PROSITE" id="PS51273">
    <property type="entry name" value="GATASE_TYPE_1"/>
    <property type="match status" value="1"/>
</dbReference>
<reference key="1">
    <citation type="journal article" date="1995" name="DNA Seq.">
        <title>Nucleotide sequence of the region between crr and cysM in Salmonella typhimurium: five novel ORFs including one encoding a putative transcriptional regulator of the phosphotransferase system.</title>
        <authorList>
            <person name="Titgemeyer F.M."/>
            <person name="Reizer J."/>
            <person name="Reizer A."/>
            <person name="Tang J."/>
            <person name="Parr T.R. Jr."/>
            <person name="Saier M.H. Jr."/>
        </authorList>
    </citation>
    <scope>NUCLEOTIDE SEQUENCE [GENOMIC DNA]</scope>
    <source>
        <strain>LT2</strain>
    </source>
</reference>
<reference key="2">
    <citation type="journal article" date="2001" name="Nature">
        <title>Complete genome sequence of Salmonella enterica serovar Typhimurium LT2.</title>
        <authorList>
            <person name="McClelland M."/>
            <person name="Sanderson K.E."/>
            <person name="Spieth J."/>
            <person name="Clifton S.W."/>
            <person name="Latreille P."/>
            <person name="Courtney L."/>
            <person name="Porwollik S."/>
            <person name="Ali J."/>
            <person name="Dante M."/>
            <person name="Du F."/>
            <person name="Hou S."/>
            <person name="Layman D."/>
            <person name="Leonard S."/>
            <person name="Nguyen C."/>
            <person name="Scott K."/>
            <person name="Holmes A."/>
            <person name="Grewal N."/>
            <person name="Mulvaney E."/>
            <person name="Ryan E."/>
            <person name="Sun H."/>
            <person name="Florea L."/>
            <person name="Miller W."/>
            <person name="Stoneking T."/>
            <person name="Nhan M."/>
            <person name="Waterston R."/>
            <person name="Wilson R.K."/>
        </authorList>
    </citation>
    <scope>NUCLEOTIDE SEQUENCE [LARGE SCALE GENOMIC DNA]</scope>
    <source>
        <strain>LT2 / SGSC1412 / ATCC 700720</strain>
    </source>
</reference>
<proteinExistence type="predicted"/>
<protein>
    <recommendedName>
        <fullName>Putative glutamine amidotransferase-like protein YfeJ</fullName>
    </recommendedName>
</protein>
<sequence length="239" mass="26951">MRVHFVVHESFESAGAYLKWAEDRGYTISWSRVYAGEALPPNADEFDMLVVFGGPQSPRTTREECPYFDSRAEQHLINQAVTARRMVIGICLGSQLIGEALGAAVCQSPEKEIGHYPITLTEAGLRHPLIAHFGSPLTVGHWHNDMPGLTDQATVLAESEGCPRQIVQYGNFVYGFQCHMEFTVEAVEGLIQHSQQELADAQGKRFIRSVAEMRAWNYQQMNEKLWRFLDELTLAHSQK</sequence>
<feature type="chain" id="PRO_0000169222" description="Putative glutamine amidotransferase-like protein YfeJ">
    <location>
        <begin position="1"/>
        <end position="239"/>
    </location>
</feature>
<feature type="domain" description="Glutamine amidotransferase type-1" evidence="1">
    <location>
        <begin position="1"/>
        <end position="200"/>
    </location>
</feature>
<accession>P40194</accession>